<name>FCPE_MACPY</name>
<dbReference type="EMBL" id="U10069">
    <property type="protein sequence ID" value="AAC49022.1"/>
    <property type="molecule type" value="mRNA"/>
</dbReference>
<dbReference type="PIR" id="S53823">
    <property type="entry name" value="S53823"/>
</dbReference>
<dbReference type="SMR" id="Q40301"/>
<dbReference type="GO" id="GO:0009535">
    <property type="term" value="C:chloroplast thylakoid membrane"/>
    <property type="evidence" value="ECO:0007669"/>
    <property type="project" value="UniProtKB-SubCell"/>
</dbReference>
<dbReference type="GO" id="GO:0030076">
    <property type="term" value="C:light-harvesting complex"/>
    <property type="evidence" value="ECO:0007669"/>
    <property type="project" value="UniProtKB-KW"/>
</dbReference>
<dbReference type="GO" id="GO:0009523">
    <property type="term" value="C:photosystem II"/>
    <property type="evidence" value="ECO:0007669"/>
    <property type="project" value="UniProtKB-KW"/>
</dbReference>
<dbReference type="GO" id="GO:0016168">
    <property type="term" value="F:chlorophyll binding"/>
    <property type="evidence" value="ECO:0007669"/>
    <property type="project" value="UniProtKB-KW"/>
</dbReference>
<dbReference type="GO" id="GO:0009765">
    <property type="term" value="P:photosynthesis, light harvesting"/>
    <property type="evidence" value="ECO:0007669"/>
    <property type="project" value="InterPro"/>
</dbReference>
<dbReference type="Gene3D" id="1.10.3460.10">
    <property type="entry name" value="Chlorophyll a/b binding protein domain"/>
    <property type="match status" value="1"/>
</dbReference>
<dbReference type="InterPro" id="IPR001344">
    <property type="entry name" value="Chloro_AB-bd_pln"/>
</dbReference>
<dbReference type="InterPro" id="IPR022796">
    <property type="entry name" value="Chloroa_b-bind"/>
</dbReference>
<dbReference type="PANTHER" id="PTHR21649">
    <property type="entry name" value="CHLOROPHYLL A/B BINDING PROTEIN"/>
    <property type="match status" value="1"/>
</dbReference>
<dbReference type="Pfam" id="PF00504">
    <property type="entry name" value="Chloroa_b-bind"/>
    <property type="match status" value="1"/>
</dbReference>
<dbReference type="SUPFAM" id="SSF103511">
    <property type="entry name" value="Chlorophyll a-b binding protein"/>
    <property type="match status" value="1"/>
</dbReference>
<evidence type="ECO:0000255" key="1"/>
<evidence type="ECO:0000305" key="2"/>
<organism>
    <name type="scientific">Macrocystis pyrifera</name>
    <name type="common">Giant kelp</name>
    <name type="synonym">Fucus pyrifer</name>
    <dbReference type="NCBI Taxonomy" id="35122"/>
    <lineage>
        <taxon>Eukaryota</taxon>
        <taxon>Sar</taxon>
        <taxon>Stramenopiles</taxon>
        <taxon>Ochrophyta</taxon>
        <taxon>PX clade</taxon>
        <taxon>Phaeophyceae</taxon>
        <taxon>Laminariales</taxon>
        <taxon>Laminariaceae</taxon>
        <taxon>Macrocystis</taxon>
    </lineage>
</organism>
<feature type="transit peptide" description="Chloroplast" evidence="2">
    <location>
        <begin position="1"/>
        <end position="34"/>
    </location>
</feature>
<feature type="chain" id="PRO_0000021241" description="Fucoxanthin-chlorophyll a-c binding protein E, chloroplastic">
    <location>
        <begin position="35"/>
        <end position="212"/>
    </location>
</feature>
<feature type="transmembrane region" description="Helical" evidence="1">
    <location>
        <begin position="76"/>
        <end position="96"/>
    </location>
</feature>
<feature type="transmembrane region" description="Helical" evidence="1">
    <location>
        <begin position="117"/>
        <end position="137"/>
    </location>
</feature>
<feature type="transmembrane region" description="Helical" evidence="1">
    <location>
        <begin position="178"/>
        <end position="198"/>
    </location>
</feature>
<reference key="1">
    <citation type="journal article" date="1995" name="Mol. Gen. Genet.">
        <title>The gene family encoding the fucoxanthin chlorophyll proteins from the brown alga Macrocystis pyrifera.</title>
        <authorList>
            <person name="Apt K.E."/>
            <person name="Clendennen S.K."/>
            <person name="Powers D.A."/>
            <person name="Grossman A.R."/>
        </authorList>
    </citation>
    <scope>NUCLEOTIDE SEQUENCE [MRNA]</scope>
    <source>
        <strain>MAL-1</strain>
    </source>
</reference>
<gene>
    <name type="primary">FCPE</name>
</gene>
<keyword id="KW-0148">Chlorophyll</keyword>
<keyword id="KW-0150">Chloroplast</keyword>
<keyword id="KW-0157">Chromophore</keyword>
<keyword id="KW-0437">Light-harvesting polypeptide</keyword>
<keyword id="KW-0472">Membrane</keyword>
<keyword id="KW-0602">Photosynthesis</keyword>
<keyword id="KW-0604">Photosystem II</keyword>
<keyword id="KW-0934">Plastid</keyword>
<keyword id="KW-0793">Thylakoid</keyword>
<keyword id="KW-0809">Transit peptide</keyword>
<keyword id="KW-0812">Transmembrane</keyword>
<keyword id="KW-1133">Transmembrane helix</keyword>
<accession>Q40301</accession>
<sequence>MAIACAAAPGLRGAEPFNGAALATSAKSSSAMKMSFESEIGAQPPIGFWDPLGLVADADQERFDRLRYVEIKHGRIAMLAVVGHITQQNTRLPGMLSFKENLAFADSPNGVAAFSKIPPLGTLQIILAIGCHELFVVKQVEGSFPGDCTTGGNIFQSAWDNMSEETQASKRAIELNNGRAAQMGILAMMVHEQLSNQPYIINDLAGAAYQFN</sequence>
<proteinExistence type="evidence at transcript level"/>
<comment type="function">
    <text>The light-harvesting complex (LHC) functions as a light receptor, it captures and delivers excitation energy to photosystems with which it is closely associated. Energy is transferred from the carotenoid and chlorophyll C (or B) to chlorophyll A and the photosynthetic reaction centers where it is used to synthesize ATP and reducing power.</text>
</comment>
<comment type="subunit">
    <text>The LHC complex of chromophytic algae is composed of fucoxanthin, chlorophyll A and C bound non-covalently by fucoxanthin chlorophyll proteins (FCPs). The ratio of pigments in this LHC is; fucoxanthin: chlorophyll C: chlorophyll A; (0.6-1): (0.1-0.3): (1).</text>
</comment>
<comment type="subcellular location">
    <subcellularLocation>
        <location>Plastid</location>
        <location>Chloroplast thylakoid membrane</location>
        <topology>Multi-pass membrane protein</topology>
    </subcellularLocation>
    <text>FCPs are probably transported across the endoplasmic reticulum membranes that surround the plastid via a signal peptide, followed by translocation across the thylakoid membrane via a transit peptide.</text>
</comment>
<comment type="induction">
    <text>Levels are increased twofold when transferred from high intensity to low intensity blue or white light.</text>
</comment>
<comment type="similarity">
    <text evidence="2">Belongs to the fucoxanthin chlorophyll protein family.</text>
</comment>
<protein>
    <recommendedName>
        <fullName>Fucoxanthin-chlorophyll a-c binding protein E, chloroplastic</fullName>
    </recommendedName>
</protein>